<feature type="chain" id="PRO_1000015262" description="S-adenosylmethionine:tRNA ribosyltransferase-isomerase">
    <location>
        <begin position="1"/>
        <end position="386"/>
    </location>
</feature>
<sequence length="386" mass="44315">MKLSDFDFDLPSELIAQYPSSKRDHSDLLIAATPPIKTKFYNIIDYLKEGDLLVFNNSKVIKAKLNLEKNRPLSKLAYRDKFEGDMECRTAVYTNVREDSSTGSTYKLPLEVELEKRSNITINLNQRLSNNCWSAFAKPARRLNIGDEFHFDNHKVIIVEKLAIGEIKVKFELDDISVFEFLDKYGEMPLPLYIRHHEAQKSNNERYQNIYSSIEGSVAAPTAGLHFTNDILNKLKAKNIQTTFLTLHVGAGTFLPVKTENIHEHKMHTEYCSITPDTARLINKAKQEKQRIIAVGTTTLRTLESSCNNGTVKACDFETDIFITPGFKFQTADILLTNFHFPKSTLFMLICAFAGFKEMHKLYKYAIKEKMRFFSYGDATLLYRKI</sequence>
<gene>
    <name evidence="1" type="primary">queA</name>
    <name type="ordered locus">A1E_01220</name>
</gene>
<comment type="function">
    <text evidence="1">Transfers and isomerizes the ribose moiety from AdoMet to the 7-aminomethyl group of 7-deazaguanine (preQ1-tRNA) to give epoxyqueuosine (oQ-tRNA).</text>
</comment>
<comment type="catalytic activity">
    <reaction evidence="1">
        <text>7-aminomethyl-7-carbaguanosine(34) in tRNA + S-adenosyl-L-methionine = epoxyqueuosine(34) in tRNA + adenine + L-methionine + 2 H(+)</text>
        <dbReference type="Rhea" id="RHEA:32155"/>
        <dbReference type="Rhea" id="RHEA-COMP:10342"/>
        <dbReference type="Rhea" id="RHEA-COMP:18582"/>
        <dbReference type="ChEBI" id="CHEBI:15378"/>
        <dbReference type="ChEBI" id="CHEBI:16708"/>
        <dbReference type="ChEBI" id="CHEBI:57844"/>
        <dbReference type="ChEBI" id="CHEBI:59789"/>
        <dbReference type="ChEBI" id="CHEBI:82833"/>
        <dbReference type="ChEBI" id="CHEBI:194443"/>
        <dbReference type="EC" id="2.4.99.17"/>
    </reaction>
</comment>
<comment type="pathway">
    <text evidence="1">tRNA modification; tRNA-queuosine biosynthesis.</text>
</comment>
<comment type="subunit">
    <text evidence="1">Monomer.</text>
</comment>
<comment type="subcellular location">
    <subcellularLocation>
        <location evidence="1">Cytoplasm</location>
    </subcellularLocation>
</comment>
<comment type="similarity">
    <text evidence="1">Belongs to the QueA family.</text>
</comment>
<name>QUEA_RICCK</name>
<dbReference type="EC" id="2.4.99.17" evidence="1"/>
<dbReference type="EMBL" id="CP000409">
    <property type="protein sequence ID" value="ABV73189.1"/>
    <property type="molecule type" value="Genomic_DNA"/>
</dbReference>
<dbReference type="RefSeq" id="WP_012148389.1">
    <property type="nucleotide sequence ID" value="NC_009879.1"/>
</dbReference>
<dbReference type="SMR" id="A8EXV6"/>
<dbReference type="STRING" id="293613.A1E_01220"/>
<dbReference type="KEGG" id="rcm:A1E_01220"/>
<dbReference type="eggNOG" id="COG0809">
    <property type="taxonomic scope" value="Bacteria"/>
</dbReference>
<dbReference type="HOGENOM" id="CLU_039110_1_0_5"/>
<dbReference type="UniPathway" id="UPA00392"/>
<dbReference type="Proteomes" id="UP000007056">
    <property type="component" value="Chromosome"/>
</dbReference>
<dbReference type="GO" id="GO:0005737">
    <property type="term" value="C:cytoplasm"/>
    <property type="evidence" value="ECO:0007669"/>
    <property type="project" value="UniProtKB-SubCell"/>
</dbReference>
<dbReference type="GO" id="GO:0051075">
    <property type="term" value="F:S-adenosylmethionine:tRNA ribosyltransferase-isomerase activity"/>
    <property type="evidence" value="ECO:0007669"/>
    <property type="project" value="UniProtKB-EC"/>
</dbReference>
<dbReference type="GO" id="GO:0008616">
    <property type="term" value="P:queuosine biosynthetic process"/>
    <property type="evidence" value="ECO:0007669"/>
    <property type="project" value="UniProtKB-UniRule"/>
</dbReference>
<dbReference type="GO" id="GO:0002099">
    <property type="term" value="P:tRNA wobble guanine modification"/>
    <property type="evidence" value="ECO:0007669"/>
    <property type="project" value="TreeGrafter"/>
</dbReference>
<dbReference type="Gene3D" id="2.40.10.240">
    <property type="entry name" value="QueA-like"/>
    <property type="match status" value="1"/>
</dbReference>
<dbReference type="Gene3D" id="3.40.1780.10">
    <property type="entry name" value="QueA-like"/>
    <property type="match status" value="2"/>
</dbReference>
<dbReference type="HAMAP" id="MF_00113">
    <property type="entry name" value="QueA"/>
    <property type="match status" value="1"/>
</dbReference>
<dbReference type="InterPro" id="IPR003699">
    <property type="entry name" value="QueA"/>
</dbReference>
<dbReference type="InterPro" id="IPR042118">
    <property type="entry name" value="QueA_dom1"/>
</dbReference>
<dbReference type="InterPro" id="IPR042119">
    <property type="entry name" value="QueA_dom2"/>
</dbReference>
<dbReference type="InterPro" id="IPR036100">
    <property type="entry name" value="QueA_sf"/>
</dbReference>
<dbReference type="InterPro" id="IPR005728">
    <property type="entry name" value="RPE1"/>
</dbReference>
<dbReference type="NCBIfam" id="NF001140">
    <property type="entry name" value="PRK00147.1"/>
    <property type="match status" value="1"/>
</dbReference>
<dbReference type="NCBIfam" id="TIGR00113">
    <property type="entry name" value="queA"/>
    <property type="match status" value="1"/>
</dbReference>
<dbReference type="NCBIfam" id="TIGR01045">
    <property type="entry name" value="RPE1"/>
    <property type="match status" value="1"/>
</dbReference>
<dbReference type="PANTHER" id="PTHR30307">
    <property type="entry name" value="S-ADENOSYLMETHIONINE:TRNA RIBOSYLTRANSFERASE-ISOMERASE"/>
    <property type="match status" value="1"/>
</dbReference>
<dbReference type="PANTHER" id="PTHR30307:SF0">
    <property type="entry name" value="S-ADENOSYLMETHIONINE:TRNA RIBOSYLTRANSFERASE-ISOMERASE"/>
    <property type="match status" value="1"/>
</dbReference>
<dbReference type="Pfam" id="PF02547">
    <property type="entry name" value="Queuosine_synth"/>
    <property type="match status" value="1"/>
</dbReference>
<dbReference type="SUPFAM" id="SSF111337">
    <property type="entry name" value="QueA-like"/>
    <property type="match status" value="2"/>
</dbReference>
<proteinExistence type="inferred from homology"/>
<accession>A8EXV6</accession>
<organism>
    <name type="scientific">Rickettsia canadensis (strain McKiel)</name>
    <dbReference type="NCBI Taxonomy" id="293613"/>
    <lineage>
        <taxon>Bacteria</taxon>
        <taxon>Pseudomonadati</taxon>
        <taxon>Pseudomonadota</taxon>
        <taxon>Alphaproteobacteria</taxon>
        <taxon>Rickettsiales</taxon>
        <taxon>Rickettsiaceae</taxon>
        <taxon>Rickettsieae</taxon>
        <taxon>Rickettsia</taxon>
        <taxon>belli group</taxon>
    </lineage>
</organism>
<evidence type="ECO:0000255" key="1">
    <source>
        <dbReference type="HAMAP-Rule" id="MF_00113"/>
    </source>
</evidence>
<protein>
    <recommendedName>
        <fullName evidence="1">S-adenosylmethionine:tRNA ribosyltransferase-isomerase</fullName>
        <ecNumber evidence="1">2.4.99.17</ecNumber>
    </recommendedName>
    <alternativeName>
        <fullName evidence="1">Queuosine biosynthesis protein QueA</fullName>
    </alternativeName>
</protein>
<keyword id="KW-0963">Cytoplasm</keyword>
<keyword id="KW-0671">Queuosine biosynthesis</keyword>
<keyword id="KW-0949">S-adenosyl-L-methionine</keyword>
<keyword id="KW-0808">Transferase</keyword>
<reference key="1">
    <citation type="submission" date="2007-09" db="EMBL/GenBank/DDBJ databases">
        <title>Complete genome sequence of Rickettsia canadensis.</title>
        <authorList>
            <person name="Madan A."/>
            <person name="Fahey J."/>
            <person name="Helton E."/>
            <person name="Ketteman M."/>
            <person name="Madan A."/>
            <person name="Rodrigues S."/>
            <person name="Sanchez A."/>
            <person name="Whiting M."/>
            <person name="Dasch G."/>
            <person name="Eremeeva M."/>
        </authorList>
    </citation>
    <scope>NUCLEOTIDE SEQUENCE [LARGE SCALE GENOMIC DNA]</scope>
    <source>
        <strain>McKiel</strain>
    </source>
</reference>